<proteinExistence type="evidence at protein level"/>
<comment type="function">
    <text evidence="1 2 3">Negatively regulates RAC1 signaling and RAC1-driven cytoskeletal remodeling (PubMed:31285585). Regulates chemotaxis, cell migration and epithelial polarization by controlling the polarity, plasticity, duration and extent of protrusions. Limits Rac1 mediated activation of the Scar/WAVE complex, focuses protrusion signals and regulates pseudopod complexity by inhibiting Scar/WAVE-induced actin polymerization (By similarity). Protects against Salmonella bacterial infection. Attenuates processes such as macropinocytosis, phagocytosis and cell migration and restrict sopE-mediated bacterial entry (PubMed:31285585). Also restricts infection mediated by Mycobacterium tuberculosis and Listeria monocytogenes (PubMed:31285585). Involved in the regulation of mitochondrial dynamics and oxidative stress (PubMed:29059164).</text>
</comment>
<comment type="subunit">
    <text evidence="1">Interacts with RAC1 (GTP-bound form preferentially).</text>
</comment>
<comment type="subcellular location">
    <subcellularLocation>
        <location evidence="1">Membrane</location>
        <topology evidence="1">Lipid-anchor</topology>
    </subcellularLocation>
    <subcellularLocation>
        <location evidence="1">Mitochondrion</location>
    </subcellularLocation>
</comment>
<comment type="tissue specificity">
    <text evidence="2">Expressed in pancreatic ducts (at protein level).</text>
</comment>
<comment type="PTM">
    <text evidence="1">Ubiquitinated at Lys-74 upon Salmonella bacterial infection.</text>
</comment>
<comment type="disruption phenotype">
    <text evidence="3">Myeloid-specific conditional knockout mice have a reduced survival following Salmonella systemic infection. Upon infection, they show increased levels of several serum pro-inflammatory cytokines and chemokines produced by activated neutrophils and monocytes.</text>
</comment>
<comment type="similarity">
    <text evidence="5">Belongs to the CYRI family.</text>
</comment>
<feature type="initiator methionine" description="Removed" evidence="1">
    <location>
        <position position="1"/>
    </location>
</feature>
<feature type="chain" id="PRO_0000187061" description="CYFIP-related Rac1 interactor B">
    <location>
        <begin position="2"/>
        <end position="324"/>
    </location>
</feature>
<feature type="lipid moiety-binding region" description="N-myristoyl glycine" evidence="1">
    <location>
        <position position="2"/>
    </location>
</feature>
<feature type="cross-link" description="Glycyl lysine isopeptide (Lys-Gly) (interchain with G-Cter in ubiquitin)" evidence="1">
    <location>
        <position position="74"/>
    </location>
</feature>
<evidence type="ECO:0000250" key="1">
    <source>
        <dbReference type="UniProtKB" id="Q9NUQ9"/>
    </source>
</evidence>
<evidence type="ECO:0000269" key="2">
    <source>
    </source>
</evidence>
<evidence type="ECO:0000269" key="3">
    <source>
    </source>
</evidence>
<evidence type="ECO:0000303" key="4">
    <source>
    </source>
</evidence>
<evidence type="ECO:0000305" key="5"/>
<dbReference type="EMBL" id="AK028062">
    <property type="protein sequence ID" value="BAC25731.1"/>
    <property type="molecule type" value="mRNA"/>
</dbReference>
<dbReference type="EMBL" id="AK075613">
    <property type="protein sequence ID" value="BAC35858.1"/>
    <property type="molecule type" value="mRNA"/>
</dbReference>
<dbReference type="EMBL" id="BC011343">
    <property type="protein sequence ID" value="AAH11343.1"/>
    <property type="molecule type" value="mRNA"/>
</dbReference>
<dbReference type="CCDS" id="CCDS27505.1"/>
<dbReference type="RefSeq" id="NP_001346964.1">
    <property type="nucleotide sequence ID" value="NM_001360035.1"/>
</dbReference>
<dbReference type="RefSeq" id="NP_001346965.1">
    <property type="nucleotide sequence ID" value="NM_001360036.1"/>
</dbReference>
<dbReference type="RefSeq" id="NP_001346966.1">
    <property type="nucleotide sequence ID" value="NM_001360037.1"/>
</dbReference>
<dbReference type="RefSeq" id="NP_659095.1">
    <property type="nucleotide sequence ID" value="NM_144846.5"/>
</dbReference>
<dbReference type="RefSeq" id="XP_006520824.1">
    <property type="nucleotide sequence ID" value="XM_006520761.2"/>
</dbReference>
<dbReference type="RefSeq" id="XP_006520826.1">
    <property type="nucleotide sequence ID" value="XM_006520763.4"/>
</dbReference>
<dbReference type="RefSeq" id="XP_006520827.1">
    <property type="nucleotide sequence ID" value="XM_006520764.5"/>
</dbReference>
<dbReference type="RefSeq" id="XP_011243865.1">
    <property type="nucleotide sequence ID" value="XM_011245563.1"/>
</dbReference>
<dbReference type="RefSeq" id="XP_011243867.1">
    <property type="nucleotide sequence ID" value="XM_011245565.2"/>
</dbReference>
<dbReference type="RefSeq" id="XP_030104331.1">
    <property type="nucleotide sequence ID" value="XM_030248471.2"/>
</dbReference>
<dbReference type="RefSeq" id="XP_030104332.1">
    <property type="nucleotide sequence ID" value="XM_030248472.1"/>
</dbReference>
<dbReference type="RefSeq" id="XP_030104333.1">
    <property type="nucleotide sequence ID" value="XM_030248473.2"/>
</dbReference>
<dbReference type="RefSeq" id="XP_030104334.1">
    <property type="nucleotide sequence ID" value="XM_030248474.2"/>
</dbReference>
<dbReference type="RefSeq" id="XP_030104335.1">
    <property type="nucleotide sequence ID" value="XM_030248475.1"/>
</dbReference>
<dbReference type="RefSeq" id="XP_036015219.1">
    <property type="nucleotide sequence ID" value="XM_036159326.1"/>
</dbReference>
<dbReference type="PDB" id="7AJL">
    <property type="method" value="X-ray"/>
    <property type="resolution" value="2.37 A"/>
    <property type="chains" value="AAA/BBB=26-324"/>
</dbReference>
<dbReference type="PDBsum" id="7AJL"/>
<dbReference type="SMR" id="Q921M7"/>
<dbReference type="BioGRID" id="230158">
    <property type="interactions" value="5"/>
</dbReference>
<dbReference type="FunCoup" id="Q921M7">
    <property type="interactions" value="2657"/>
</dbReference>
<dbReference type="IntAct" id="Q921M7">
    <property type="interactions" value="4"/>
</dbReference>
<dbReference type="MINT" id="Q921M7"/>
<dbReference type="STRING" id="10090.ENSMUSP00000066359"/>
<dbReference type="GlyConnect" id="2631">
    <property type="glycosylation" value="1 N-Linked glycan (1 site)"/>
</dbReference>
<dbReference type="GlyCosmos" id="Q921M7">
    <property type="glycosylation" value="1 site, 1 glycan"/>
</dbReference>
<dbReference type="GlyGen" id="Q921M7">
    <property type="glycosylation" value="2 sites, 2 N-linked glycans (1 site), 1 O-linked glycan (1 site)"/>
</dbReference>
<dbReference type="iPTMnet" id="Q921M7"/>
<dbReference type="PhosphoSitePlus" id="Q921M7"/>
<dbReference type="SwissPalm" id="Q921M7"/>
<dbReference type="jPOST" id="Q921M7"/>
<dbReference type="PaxDb" id="10090-ENSMUSP00000066359"/>
<dbReference type="PeptideAtlas" id="Q921M7"/>
<dbReference type="ProteomicsDB" id="277027"/>
<dbReference type="Pumba" id="Q921M7"/>
<dbReference type="Antibodypedia" id="2198">
    <property type="antibodies" value="77 antibodies from 21 providers"/>
</dbReference>
<dbReference type="Ensembl" id="ENSMUST00000063838.11">
    <property type="protein sequence ID" value="ENSMUSP00000066359.5"/>
    <property type="gene ID" value="ENSMUSG00000022378.15"/>
</dbReference>
<dbReference type="Ensembl" id="ENSMUST00000164532.3">
    <property type="protein sequence ID" value="ENSMUSP00000132486.2"/>
    <property type="gene ID" value="ENSMUSG00000022378.15"/>
</dbReference>
<dbReference type="Ensembl" id="ENSMUST00000228226.2">
    <property type="protein sequence ID" value="ENSMUSP00000154320.2"/>
    <property type="gene ID" value="ENSMUSG00000022378.15"/>
</dbReference>
<dbReference type="GeneID" id="223601"/>
<dbReference type="KEGG" id="mmu:223601"/>
<dbReference type="UCSC" id="uc007vze.2">
    <property type="organism name" value="mouse"/>
</dbReference>
<dbReference type="AGR" id="MGI:1923520"/>
<dbReference type="CTD" id="51571"/>
<dbReference type="MGI" id="MGI:1923520">
    <property type="gene designation" value="Cyrib"/>
</dbReference>
<dbReference type="VEuPathDB" id="HostDB:ENSMUSG00000022378"/>
<dbReference type="eggNOG" id="KOG3951">
    <property type="taxonomic scope" value="Eukaryota"/>
</dbReference>
<dbReference type="GeneTree" id="ENSGT00390000015159"/>
<dbReference type="HOGENOM" id="CLU_056470_0_0_1"/>
<dbReference type="InParanoid" id="Q921M7"/>
<dbReference type="OMA" id="EYRSRFN"/>
<dbReference type="OrthoDB" id="60973at2759"/>
<dbReference type="PhylomeDB" id="Q921M7"/>
<dbReference type="TreeFam" id="TF314541"/>
<dbReference type="Reactome" id="R-MMU-114608">
    <property type="pathway name" value="Platelet degranulation"/>
</dbReference>
<dbReference type="BioGRID-ORCS" id="223601">
    <property type="hits" value="8 hits in 76 CRISPR screens"/>
</dbReference>
<dbReference type="ChiTaRS" id="Fam49b">
    <property type="organism name" value="mouse"/>
</dbReference>
<dbReference type="PRO" id="PR:Q921M7"/>
<dbReference type="Proteomes" id="UP000000589">
    <property type="component" value="Chromosome 15"/>
</dbReference>
<dbReference type="RNAct" id="Q921M7">
    <property type="molecule type" value="protein"/>
</dbReference>
<dbReference type="Bgee" id="ENSMUSG00000022378">
    <property type="expression patterns" value="Expressed in granulocyte and 250 other cell types or tissues"/>
</dbReference>
<dbReference type="ExpressionAtlas" id="Q921M7">
    <property type="expression patterns" value="baseline and differential"/>
</dbReference>
<dbReference type="GO" id="GO:0005929">
    <property type="term" value="C:cilium"/>
    <property type="evidence" value="ECO:0000314"/>
    <property type="project" value="MGI"/>
</dbReference>
<dbReference type="GO" id="GO:0016020">
    <property type="term" value="C:membrane"/>
    <property type="evidence" value="ECO:0007669"/>
    <property type="project" value="UniProtKB-SubCell"/>
</dbReference>
<dbReference type="GO" id="GO:0005739">
    <property type="term" value="C:mitochondrion"/>
    <property type="evidence" value="ECO:0000250"/>
    <property type="project" value="UniProtKB"/>
</dbReference>
<dbReference type="GO" id="GO:0023030">
    <property type="term" value="F:MHC class Ib protein binding, via antigen binding groove"/>
    <property type="evidence" value="ECO:0000314"/>
    <property type="project" value="UniProtKB"/>
</dbReference>
<dbReference type="GO" id="GO:0031267">
    <property type="term" value="F:small GTPase binding"/>
    <property type="evidence" value="ECO:0007669"/>
    <property type="project" value="Ensembl"/>
</dbReference>
<dbReference type="GO" id="GO:0071219">
    <property type="term" value="P:cellular response to molecule of bacterial origin"/>
    <property type="evidence" value="ECO:0000315"/>
    <property type="project" value="UniProtKB"/>
</dbReference>
<dbReference type="GO" id="GO:0030837">
    <property type="term" value="P:negative regulation of actin filament polymerization"/>
    <property type="evidence" value="ECO:0000250"/>
    <property type="project" value="UniProtKB"/>
</dbReference>
<dbReference type="GO" id="GO:0051058">
    <property type="term" value="P:negative regulation of small GTPase mediated signal transduction"/>
    <property type="evidence" value="ECO:0000315"/>
    <property type="project" value="UniProtKB"/>
</dbReference>
<dbReference type="GO" id="GO:2000568">
    <property type="term" value="P:positive regulation of memory T cell activation"/>
    <property type="evidence" value="ECO:0000314"/>
    <property type="project" value="UniProtKB"/>
</dbReference>
<dbReference type="GO" id="GO:0050870">
    <property type="term" value="P:positive regulation of T cell activation"/>
    <property type="evidence" value="ECO:0000314"/>
    <property type="project" value="UniProtKB"/>
</dbReference>
<dbReference type="GO" id="GO:0001916">
    <property type="term" value="P:positive regulation of T cell mediated cytotoxicity"/>
    <property type="evidence" value="ECO:0000314"/>
    <property type="project" value="UniProtKB"/>
</dbReference>
<dbReference type="GO" id="GO:0032729">
    <property type="term" value="P:positive regulation of type II interferon production"/>
    <property type="evidence" value="ECO:0000314"/>
    <property type="project" value="UniProtKB"/>
</dbReference>
<dbReference type="GO" id="GO:0030334">
    <property type="term" value="P:regulation of cell migration"/>
    <property type="evidence" value="ECO:0000250"/>
    <property type="project" value="UniProtKB"/>
</dbReference>
<dbReference type="GO" id="GO:0050920">
    <property type="term" value="P:regulation of chemotaxis"/>
    <property type="evidence" value="ECO:0000250"/>
    <property type="project" value="UniProtKB"/>
</dbReference>
<dbReference type="GO" id="GO:2000114">
    <property type="term" value="P:regulation of establishment of cell polarity"/>
    <property type="evidence" value="ECO:0000250"/>
    <property type="project" value="UniProtKB"/>
</dbReference>
<dbReference type="GO" id="GO:0090140">
    <property type="term" value="P:regulation of mitochondrial fission"/>
    <property type="evidence" value="ECO:0000315"/>
    <property type="project" value="UniProtKB"/>
</dbReference>
<dbReference type="InterPro" id="IPR039789">
    <property type="entry name" value="CYRI"/>
</dbReference>
<dbReference type="InterPro" id="IPR009828">
    <property type="entry name" value="CYRIA/CYRIB_Rac1-bd"/>
</dbReference>
<dbReference type="PANTHER" id="PTHR12422">
    <property type="entry name" value="GH09096P"/>
    <property type="match status" value="1"/>
</dbReference>
<dbReference type="Pfam" id="PF07159">
    <property type="entry name" value="CYRIA-B_Rac1-bd"/>
    <property type="match status" value="1"/>
</dbReference>
<name>CYRIB_MOUSE</name>
<sequence length="324" mass="36776">MGNLLKVLTCTDLEQGPNFFLDFENAQPTESEKEIYNQVNVVLKDAEGILEDLQSYRGAGHEIREAIQHPADEKLQEKAWGAVVPLVGKLKKFYEFSQRLEAALRGLLGALTSTPYSPTQHLEREQALAKQFAEILHFTLRFDELKMTNPAIQNDFSYYRRTLSRMRINNVPAEGENEVNNELANRMSLFYAEATPMLKTLSDATTKFVSENKNLPIENTTDCLSTMASVCRVMLETPEYRSRFTNEETVSFCLRVMVGVIILYDHVHPVGAFAKTSKIDMKGCIKVLKDQPPNSVEGLLNALRYTTKHLNDETTSKQIRSMLQ</sequence>
<gene>
    <name type="primary">Cyrib</name>
    <name evidence="4" type="synonym">Cyri</name>
    <name type="synonym">Fam49b</name>
</gene>
<organism>
    <name type="scientific">Mus musculus</name>
    <name type="common">Mouse</name>
    <dbReference type="NCBI Taxonomy" id="10090"/>
    <lineage>
        <taxon>Eukaryota</taxon>
        <taxon>Metazoa</taxon>
        <taxon>Chordata</taxon>
        <taxon>Craniata</taxon>
        <taxon>Vertebrata</taxon>
        <taxon>Euteleostomi</taxon>
        <taxon>Mammalia</taxon>
        <taxon>Eutheria</taxon>
        <taxon>Euarchontoglires</taxon>
        <taxon>Glires</taxon>
        <taxon>Rodentia</taxon>
        <taxon>Myomorpha</taxon>
        <taxon>Muroidea</taxon>
        <taxon>Muridae</taxon>
        <taxon>Murinae</taxon>
        <taxon>Mus</taxon>
        <taxon>Mus</taxon>
    </lineage>
</organism>
<accession>Q921M7</accession>
<keyword id="KW-0002">3D-structure</keyword>
<keyword id="KW-1017">Isopeptide bond</keyword>
<keyword id="KW-0449">Lipoprotein</keyword>
<keyword id="KW-0472">Membrane</keyword>
<keyword id="KW-0496">Mitochondrion</keyword>
<keyword id="KW-0519">Myristate</keyword>
<keyword id="KW-1185">Reference proteome</keyword>
<keyword id="KW-0832">Ubl conjugation</keyword>
<protein>
    <recommendedName>
        <fullName>CYFIP-related Rac1 interactor B</fullName>
    </recommendedName>
    <alternativeName>
        <fullName>Protein FAM49B</fullName>
    </alternativeName>
</protein>
<reference key="1">
    <citation type="journal article" date="2005" name="Science">
        <title>The transcriptional landscape of the mammalian genome.</title>
        <authorList>
            <person name="Carninci P."/>
            <person name="Kasukawa T."/>
            <person name="Katayama S."/>
            <person name="Gough J."/>
            <person name="Frith M.C."/>
            <person name="Maeda N."/>
            <person name="Oyama R."/>
            <person name="Ravasi T."/>
            <person name="Lenhard B."/>
            <person name="Wells C."/>
            <person name="Kodzius R."/>
            <person name="Shimokawa K."/>
            <person name="Bajic V.B."/>
            <person name="Brenner S.E."/>
            <person name="Batalov S."/>
            <person name="Forrest A.R."/>
            <person name="Zavolan M."/>
            <person name="Davis M.J."/>
            <person name="Wilming L.G."/>
            <person name="Aidinis V."/>
            <person name="Allen J.E."/>
            <person name="Ambesi-Impiombato A."/>
            <person name="Apweiler R."/>
            <person name="Aturaliya R.N."/>
            <person name="Bailey T.L."/>
            <person name="Bansal M."/>
            <person name="Baxter L."/>
            <person name="Beisel K.W."/>
            <person name="Bersano T."/>
            <person name="Bono H."/>
            <person name="Chalk A.M."/>
            <person name="Chiu K.P."/>
            <person name="Choudhary V."/>
            <person name="Christoffels A."/>
            <person name="Clutterbuck D.R."/>
            <person name="Crowe M.L."/>
            <person name="Dalla E."/>
            <person name="Dalrymple B.P."/>
            <person name="de Bono B."/>
            <person name="Della Gatta G."/>
            <person name="di Bernardo D."/>
            <person name="Down T."/>
            <person name="Engstrom P."/>
            <person name="Fagiolini M."/>
            <person name="Faulkner G."/>
            <person name="Fletcher C.F."/>
            <person name="Fukushima T."/>
            <person name="Furuno M."/>
            <person name="Futaki S."/>
            <person name="Gariboldi M."/>
            <person name="Georgii-Hemming P."/>
            <person name="Gingeras T.R."/>
            <person name="Gojobori T."/>
            <person name="Green R.E."/>
            <person name="Gustincich S."/>
            <person name="Harbers M."/>
            <person name="Hayashi Y."/>
            <person name="Hensch T.K."/>
            <person name="Hirokawa N."/>
            <person name="Hill D."/>
            <person name="Huminiecki L."/>
            <person name="Iacono M."/>
            <person name="Ikeo K."/>
            <person name="Iwama A."/>
            <person name="Ishikawa T."/>
            <person name="Jakt M."/>
            <person name="Kanapin A."/>
            <person name="Katoh M."/>
            <person name="Kawasawa Y."/>
            <person name="Kelso J."/>
            <person name="Kitamura H."/>
            <person name="Kitano H."/>
            <person name="Kollias G."/>
            <person name="Krishnan S.P."/>
            <person name="Kruger A."/>
            <person name="Kummerfeld S.K."/>
            <person name="Kurochkin I.V."/>
            <person name="Lareau L.F."/>
            <person name="Lazarevic D."/>
            <person name="Lipovich L."/>
            <person name="Liu J."/>
            <person name="Liuni S."/>
            <person name="McWilliam S."/>
            <person name="Madan Babu M."/>
            <person name="Madera M."/>
            <person name="Marchionni L."/>
            <person name="Matsuda H."/>
            <person name="Matsuzawa S."/>
            <person name="Miki H."/>
            <person name="Mignone F."/>
            <person name="Miyake S."/>
            <person name="Morris K."/>
            <person name="Mottagui-Tabar S."/>
            <person name="Mulder N."/>
            <person name="Nakano N."/>
            <person name="Nakauchi H."/>
            <person name="Ng P."/>
            <person name="Nilsson R."/>
            <person name="Nishiguchi S."/>
            <person name="Nishikawa S."/>
            <person name="Nori F."/>
            <person name="Ohara O."/>
            <person name="Okazaki Y."/>
            <person name="Orlando V."/>
            <person name="Pang K.C."/>
            <person name="Pavan W.J."/>
            <person name="Pavesi G."/>
            <person name="Pesole G."/>
            <person name="Petrovsky N."/>
            <person name="Piazza S."/>
            <person name="Reed J."/>
            <person name="Reid J.F."/>
            <person name="Ring B.Z."/>
            <person name="Ringwald M."/>
            <person name="Rost B."/>
            <person name="Ruan Y."/>
            <person name="Salzberg S.L."/>
            <person name="Sandelin A."/>
            <person name="Schneider C."/>
            <person name="Schoenbach C."/>
            <person name="Sekiguchi K."/>
            <person name="Semple C.A."/>
            <person name="Seno S."/>
            <person name="Sessa L."/>
            <person name="Sheng Y."/>
            <person name="Shibata Y."/>
            <person name="Shimada H."/>
            <person name="Shimada K."/>
            <person name="Silva D."/>
            <person name="Sinclair B."/>
            <person name="Sperling S."/>
            <person name="Stupka E."/>
            <person name="Sugiura K."/>
            <person name="Sultana R."/>
            <person name="Takenaka Y."/>
            <person name="Taki K."/>
            <person name="Tammoja K."/>
            <person name="Tan S.L."/>
            <person name="Tang S."/>
            <person name="Taylor M.S."/>
            <person name="Tegner J."/>
            <person name="Teichmann S.A."/>
            <person name="Ueda H.R."/>
            <person name="van Nimwegen E."/>
            <person name="Verardo R."/>
            <person name="Wei C.L."/>
            <person name="Yagi K."/>
            <person name="Yamanishi H."/>
            <person name="Zabarovsky E."/>
            <person name="Zhu S."/>
            <person name="Zimmer A."/>
            <person name="Hide W."/>
            <person name="Bult C."/>
            <person name="Grimmond S.M."/>
            <person name="Teasdale R.D."/>
            <person name="Liu E.T."/>
            <person name="Brusic V."/>
            <person name="Quackenbush J."/>
            <person name="Wahlestedt C."/>
            <person name="Mattick J.S."/>
            <person name="Hume D.A."/>
            <person name="Kai C."/>
            <person name="Sasaki D."/>
            <person name="Tomaru Y."/>
            <person name="Fukuda S."/>
            <person name="Kanamori-Katayama M."/>
            <person name="Suzuki M."/>
            <person name="Aoki J."/>
            <person name="Arakawa T."/>
            <person name="Iida J."/>
            <person name="Imamura K."/>
            <person name="Itoh M."/>
            <person name="Kato T."/>
            <person name="Kawaji H."/>
            <person name="Kawagashira N."/>
            <person name="Kawashima T."/>
            <person name="Kojima M."/>
            <person name="Kondo S."/>
            <person name="Konno H."/>
            <person name="Nakano K."/>
            <person name="Ninomiya N."/>
            <person name="Nishio T."/>
            <person name="Okada M."/>
            <person name="Plessy C."/>
            <person name="Shibata K."/>
            <person name="Shiraki T."/>
            <person name="Suzuki S."/>
            <person name="Tagami M."/>
            <person name="Waki K."/>
            <person name="Watahiki A."/>
            <person name="Okamura-Oho Y."/>
            <person name="Suzuki H."/>
            <person name="Kawai J."/>
            <person name="Hayashizaki Y."/>
        </authorList>
    </citation>
    <scope>NUCLEOTIDE SEQUENCE [LARGE SCALE MRNA]</scope>
    <source>
        <strain>C57BL/6J</strain>
        <tissue>Cerebellum</tissue>
        <tissue>Spleen</tissue>
    </source>
</reference>
<reference key="2">
    <citation type="journal article" date="2004" name="Genome Res.">
        <title>The status, quality, and expansion of the NIH full-length cDNA project: the Mammalian Gene Collection (MGC).</title>
        <authorList>
            <consortium name="The MGC Project Team"/>
        </authorList>
    </citation>
    <scope>NUCLEOTIDE SEQUENCE [LARGE SCALE MRNA]</scope>
    <source>
        <strain>Czech II</strain>
        <tissue>Mammary tumor</tissue>
    </source>
</reference>
<reference key="3">
    <citation type="journal article" date="2010" name="Cell">
        <title>A tissue-specific atlas of mouse protein phosphorylation and expression.</title>
        <authorList>
            <person name="Huttlin E.L."/>
            <person name="Jedrychowski M.P."/>
            <person name="Elias J.E."/>
            <person name="Goswami T."/>
            <person name="Rad R."/>
            <person name="Beausoleil S.A."/>
            <person name="Villen J."/>
            <person name="Haas W."/>
            <person name="Sowa M.E."/>
            <person name="Gygi S.P."/>
        </authorList>
    </citation>
    <scope>IDENTIFICATION BY MASS SPECTROMETRY [LARGE SCALE ANALYSIS]</scope>
    <source>
        <tissue>Brain</tissue>
        <tissue>Brown adipose tissue</tissue>
        <tissue>Heart</tissue>
        <tissue>Kidney</tissue>
        <tissue>Liver</tissue>
        <tissue>Lung</tissue>
        <tissue>Pancreas</tissue>
        <tissue>Spleen</tissue>
        <tissue>Testis</tissue>
    </source>
</reference>
<reference key="4">
    <citation type="journal article" date="2018" name="Oncogene">
        <title>FAM49B, a novel regulator of mitochondrial function and integrity that suppresses tumor metastasis.</title>
        <authorList>
            <person name="Chattaragada M.S."/>
            <person name="Riganti C."/>
            <person name="Sassoe M."/>
            <person name="Principe M."/>
            <person name="Santamorena M.M."/>
            <person name="Roux C."/>
            <person name="Curcio C."/>
            <person name="Evangelista A."/>
            <person name="Allavena P."/>
            <person name="Salvia R."/>
            <person name="Rusev B."/>
            <person name="Scarpa A."/>
            <person name="Cappello P."/>
            <person name="Novelli F."/>
        </authorList>
    </citation>
    <scope>FUNCTION</scope>
    <scope>TISSUE SPECIFICITY</scope>
</reference>
<reference key="5">
    <citation type="journal article" date="2019" name="Nat. Microbiol.">
        <title>CYRI/FAM49B negatively regulates RAC1-driven cytoskeletal remodelling and protects against bacterial infection.</title>
        <authorList>
            <person name="Yuki K.E."/>
            <person name="Marei H."/>
            <person name="Fiskin E."/>
            <person name="Eva M.M."/>
            <person name="Gopal A.A."/>
            <person name="Schwartzentruber J.A."/>
            <person name="Majewski J."/>
            <person name="Cellier M."/>
            <person name="Mandl J.N."/>
            <person name="Vidal S.M."/>
            <person name="Malo D."/>
            <person name="Dikic I."/>
        </authorList>
    </citation>
    <scope>FUNCTION</scope>
    <scope>DISRUPTION PHENOTYPE</scope>
</reference>